<accession>Q29040</accession>
<organism>
    <name type="scientific">Sus scrofa</name>
    <name type="common">Pig</name>
    <dbReference type="NCBI Taxonomy" id="9823"/>
    <lineage>
        <taxon>Eukaryota</taxon>
        <taxon>Metazoa</taxon>
        <taxon>Chordata</taxon>
        <taxon>Craniata</taxon>
        <taxon>Vertebrata</taxon>
        <taxon>Euteleostomi</taxon>
        <taxon>Mammalia</taxon>
        <taxon>Eutheria</taxon>
        <taxon>Laurasiatheria</taxon>
        <taxon>Artiodactyla</taxon>
        <taxon>Suina</taxon>
        <taxon>Suidae</taxon>
        <taxon>Sus</taxon>
    </lineage>
</organism>
<comment type="function">
    <text evidence="1 3">Nuclear hormone receptor. The steroid hormones and their receptors are involved in the regulation of eukaryotic gene expression and affect cellular proliferation and differentiation in target tissues. Ligand-dependent nuclear transactivation involves either direct homodimer binding to a palindromic estrogen response element (ERE) sequence or association with other DNA-binding transcription factors, such as AP-1/c-Jun, c-Fos, ATF-2, Sp1 and Sp3, to mediate ERE-independent signaling. Ligand binding induces a conformational change allowing subsequent or combinatorial association with multiprotein coactivator complexes through LXXLL motifs of their respective components. Mutual transrepression occurs between the estrogen receptor (ER) and NF-kappa-B in a cell-type specific manner. Decreases NF-kappa-B DNA-binding activity and inhibits NF-kappa-B-mediated transcription from the IL6 promoter and displace RELA/p65 and associated coregulators from the promoter. Recruited to the NF-kappa-B response element of the CCL2 and IL8 promoters and can displace CREBBP. Present with NF-kappa-B components RELA/p65 and NFKB1/p50 on ERE sequences. Can also act synergistically with NF-kappa-B to activate transcription involving respective recruitment adjacent response elements; the function involves CREBBP. Can activate the transcriptional activity of TFF1. Also mediates membrane-initiated estrogen signaling involving various kinase cascades. Essential for MTA1-mediated transcriptional regulation of BRCA1 and BCAS3 (By similarity). Maintains neuronal survival in response to ischemic reperfusion injury when in the presence of circulating estradiol (17-beta-estradiol/E2) (By similarity).</text>
</comment>
<comment type="subunit">
    <text evidence="2 3 4">Binds DNA as a homodimer. Can form a heterodimer with ESR2. Interacts with coactivator NCOA5. Interacts with PELP1, the interaction is enhanced by 17-beta-estradiol; the interaction increases ESR1 transcriptional activity (By similarity). Interacts with NCOA7; the interaction is ligand-inducible. Interacts with AKAP13, CUEDC2, HEXIM1, KDM5A, MAP1S, SMARD1, and UBE1C. Interacts with MUC1; the interaction is stimulated by 7 beta-estradiol (E2) and enhances ESR1-mediated transcription. Interacts with DNTTIP2, and UIMC1. Interacts with KMT2D/MLL2. Interacts with ATAD2; the interaction is enhanced by estradiol. Interacts with KIF18A and LDB1. Interacts with RLIM (via its C-terminus). Interacts with MACROD1. Interacts with SH2D4A and PLCG. Interacts with SH2D4A; the interaction blocks binding to PLCG and inhibits estrogen-induced cell proliferation. Interacts with DYNLL1. Interacts with CCDC62; the interaction requires estradiol and appears to enhance the transcription of target genes. Interacts with NR2C1; the interaction prevents homodimerization of ESR1 and suppresses its transcriptional activity and cell growth. Interacts with DNAAF4. Interacts with PRMT2. Interacts with RBFOX2. Interacts with EP300; the interaction is estrogen-dependent and enhanced by CITED1. Interacts with CITED1; the interaction is estrogen-dependent. Interacts with FAM120B, FOXL2, PHB2 and SLC30A9. Interacts with coactivators NCOA3 and NCOA6. Interacts with STK3/MST2 only in the presence of SAV1 and vice-versa. Binds to CSNK1D. Interacts with NCOA2; NCOA2 can interact with ESR1 AF-1 and AF-2 domains simultaneously and mediate their transcriptional synergy. Interacts with DDX5. Interacts with NCOA1; the interaction seems to require a self-association of N-terminal and C-terminal regions. Interacts with ZNF366, DDX17, NFKB1, RELA, SP1 and SP3. Interacts with NRIP1. Interacts with GPER1; the interaction occurs in an estrogen-dependent manner. Interacts with CLOCK and the interaction is stimulated by estrogen. Interacts with TRIP4 (ufmylated); estrogen dependent. Interacts with LMTK3; the interaction phosphorylates ESR1 (in vitro) and protects it against proteasomal degradation. Interacts with CCAR2 (via N-terminus) in a ligand-independent manner. Interacts with ZFHX3. Interacts with SFR1 in a ligand-dependent and -independent manner. Interacts with DCAF13, LATS1 and DCAF1; regulates ESR1 ubiquitination and ubiquitin-mediated proteasomal degradation. Interacts (via DNA-binding domain) with POU4F2 (C-terminus); this interaction increases the estrogen receptor ESR1 transcriptional activity in a DNA- and ligand 17-beta-estradiol-independent manner. Interacts with ESRRB isoform 1. Interacts with UBE3A and WBP2. Interacts with GTF2B. Interacts with RBM39. In the absence of hormonal ligand, interacts with TACC1 (By similarity). Interacts with PI3KR1 or PI3KR2 and PTK2/FAK1 (By similarity). Interacts with SRC (By similarity). Interacts with BAG1; the interaction is promoted in the absence of estradiol (17-beta-estradiol/E2) (By similarity). Interacts with and ubiquitinated by STUB1; the interaction is promoted in the absence of estradiol (17-beta-estradiol/E2) (By similarity). Interacts with NEDD8 (By similarity).</text>
</comment>
<comment type="subcellular location">
    <subcellularLocation>
        <location evidence="5">Nucleus</location>
    </subcellularLocation>
    <subcellularLocation>
        <location evidence="1">Cytoplasm</location>
    </subcellularLocation>
    <subcellularLocation>
        <location evidence="1">Golgi apparatus</location>
    </subcellularLocation>
    <subcellularLocation>
        <location evidence="1">Cell membrane</location>
    </subcellularLocation>
    <text evidence="1">Colocalizes with ZDHHC7 and ZDHHC21 in the Golgi apparatus where most probably palmitoylation occurs. Associated with the plasma membrane when palmitoylated.</text>
</comment>
<comment type="domain">
    <text evidence="1">Composed of three domains: a modulating N-terminal domain, a DNA-binding domain and a C-terminal ligand-binding domain. The modulating domain, also known as A/B or AF-1 domain has a ligand-independent transactivation function. The C-terminus contains a ligand-dependent transactivation domain, also known as E/F or AF-2 domain which overlaps with the ligand binding domain. AF-1 and AF-2 activate transcription independently and synergistically and act in a promoter- and cell-specific manner (By similarity).</text>
</comment>
<comment type="PTM">
    <text evidence="2">Phosphorylated by cyclin A/CDK2 and CK1. Phosphorylation probably enhances transcriptional activity. Dephosphorylation at Ser-118 by PPP5C inhibits its transactivation activity (By similarity). Phosphorylated by LMTK3 (in vitro) (By similarity).</text>
</comment>
<comment type="PTM">
    <text evidence="2 3">Ubiquitinated; regulated by LATS1 via DCAF1 it leads to ESR1 proteasomal degradation. Deubiquitinated by OTUB1 (By similarity). Ubiquitinated by STUB1/CHIP; in the CA1 hippocampal region following loss of endogenous circulating estradiol (17-beta-estradiol/E2) (By similarity). Ubiquitinated by UBR5, leading to its degradation: UBR5 specifically recognizes and binds ligand-bound ESR1 when it is not associated with coactivators (NCOAs). In presence of NCOAs, the UBR5-degron is not accessible, preventing its ubiquitination and degradation (By similarity).</text>
</comment>
<comment type="PTM">
    <text evidence="1">Palmitoylated at Cys-447 by ZDHHC7 and ZDHHC21. Palmitoylation is required for plasma membrane targeting and for rapid intracellular signaling via ERK and AKT kinases and cAMP generation, but not for signaling mediated by the nuclear hormone receptor (By similarity).</text>
</comment>
<comment type="PTM">
    <text evidence="2">Dimethylated by PRMT1 at Arg-260. The methylation may favor cytoplasmic localization. Demethylated by JMJD6 at Arg-260.</text>
</comment>
<comment type="similarity">
    <text evidence="8">Belongs to the nuclear hormone receptor family. NR3 subfamily.</text>
</comment>
<dbReference type="EMBL" id="Z37167">
    <property type="protein sequence ID" value="CAA85524.1"/>
    <property type="molecule type" value="mRNA"/>
</dbReference>
<dbReference type="PIR" id="I47140">
    <property type="entry name" value="I47140"/>
</dbReference>
<dbReference type="RefSeq" id="NP_999385.1">
    <property type="nucleotide sequence ID" value="NM_214220.1"/>
</dbReference>
<dbReference type="RefSeq" id="XP_020938720.1">
    <property type="nucleotide sequence ID" value="XM_021083061.1"/>
</dbReference>
<dbReference type="RefSeq" id="XP_020938729.1">
    <property type="nucleotide sequence ID" value="XM_021083070.1"/>
</dbReference>
<dbReference type="RefSeq" id="XP_020938734.1">
    <property type="nucleotide sequence ID" value="XM_021083075.1"/>
</dbReference>
<dbReference type="SMR" id="Q29040"/>
<dbReference type="FunCoup" id="Q29040">
    <property type="interactions" value="218"/>
</dbReference>
<dbReference type="STRING" id="9823.ENSSSCP00000030835"/>
<dbReference type="GlyCosmos" id="Q29040">
    <property type="glycosylation" value="1 site, No reported glycans"/>
</dbReference>
<dbReference type="GlyGen" id="Q29040">
    <property type="glycosylation" value="2 sites"/>
</dbReference>
<dbReference type="PaxDb" id="9823-ENSSSCP00000030835"/>
<dbReference type="Ensembl" id="ENSSSCT00000035147.2">
    <property type="protein sequence ID" value="ENSSSCP00000030835.2"/>
    <property type="gene ID" value="ENSSSCG00000025777.5"/>
</dbReference>
<dbReference type="Ensembl" id="ENSSSCT00025061031.1">
    <property type="protein sequence ID" value="ENSSSCP00025025914.1"/>
    <property type="gene ID" value="ENSSSCG00025044932.1"/>
</dbReference>
<dbReference type="Ensembl" id="ENSSSCT00030090594.1">
    <property type="protein sequence ID" value="ENSSSCP00030041735.1"/>
    <property type="gene ID" value="ENSSSCG00030064727.1"/>
</dbReference>
<dbReference type="Ensembl" id="ENSSSCT00040088178.1">
    <property type="protein sequence ID" value="ENSSSCP00040038757.1"/>
    <property type="gene ID" value="ENSSSCG00040064377.1"/>
</dbReference>
<dbReference type="Ensembl" id="ENSSSCT00045062399.1">
    <property type="protein sequence ID" value="ENSSSCP00045043938.1"/>
    <property type="gene ID" value="ENSSSCG00045036259.1"/>
</dbReference>
<dbReference type="Ensembl" id="ENSSSCT00050101315.1">
    <property type="protein sequence ID" value="ENSSSCP00050044055.1"/>
    <property type="gene ID" value="ENSSSCG00050074040.1"/>
</dbReference>
<dbReference type="Ensembl" id="ENSSSCT00055032656.1">
    <property type="protein sequence ID" value="ENSSSCP00055026013.1"/>
    <property type="gene ID" value="ENSSSCG00055016487.1"/>
</dbReference>
<dbReference type="Ensembl" id="ENSSSCT00060059864.1">
    <property type="protein sequence ID" value="ENSSSCP00060025649.1"/>
    <property type="gene ID" value="ENSSSCG00060044136.1"/>
</dbReference>
<dbReference type="Ensembl" id="ENSSSCT00065060029.1">
    <property type="protein sequence ID" value="ENSSSCP00065026019.1"/>
    <property type="gene ID" value="ENSSSCG00065043873.1"/>
</dbReference>
<dbReference type="Ensembl" id="ENSSSCT00070052480.1">
    <property type="protein sequence ID" value="ENSSSCP00070044420.1"/>
    <property type="gene ID" value="ENSSSCG00070026203.1"/>
</dbReference>
<dbReference type="Ensembl" id="ENSSSCT00070052481.1">
    <property type="protein sequence ID" value="ENSSSCP00070044421.1"/>
    <property type="gene ID" value="ENSSSCG00070026203.1"/>
</dbReference>
<dbReference type="Ensembl" id="ENSSSCT00070052482.1">
    <property type="protein sequence ID" value="ENSSSCP00070044422.1"/>
    <property type="gene ID" value="ENSSSCG00070026203.1"/>
</dbReference>
<dbReference type="Ensembl" id="ENSSSCT00070052483.1">
    <property type="protein sequence ID" value="ENSSSCP00070044423.1"/>
    <property type="gene ID" value="ENSSSCG00070026203.1"/>
</dbReference>
<dbReference type="Ensembl" id="ENSSSCT00105041377">
    <property type="protein sequence ID" value="ENSSSCP00105028899"/>
    <property type="gene ID" value="ENSSSCG00105021657"/>
</dbReference>
<dbReference type="Ensembl" id="ENSSSCT00110053223">
    <property type="protein sequence ID" value="ENSSSCP00110037151"/>
    <property type="gene ID" value="ENSSSCG00110027687"/>
</dbReference>
<dbReference type="Ensembl" id="ENSSSCT00115000993">
    <property type="protein sequence ID" value="ENSSSCP00115000925"/>
    <property type="gene ID" value="ENSSSCG00115000619"/>
</dbReference>
<dbReference type="Ensembl" id="ENSSSCT00130064005">
    <property type="protein sequence ID" value="ENSSSCP00130045848"/>
    <property type="gene ID" value="ENSSSCG00130032770"/>
</dbReference>
<dbReference type="GeneID" id="397435"/>
<dbReference type="KEGG" id="ssc:397435"/>
<dbReference type="CTD" id="2099"/>
<dbReference type="VGNC" id="VGNC:103089">
    <property type="gene designation" value="ESR1"/>
</dbReference>
<dbReference type="eggNOG" id="KOG3575">
    <property type="taxonomic scope" value="Eukaryota"/>
</dbReference>
<dbReference type="GeneTree" id="ENSGT00940000158133"/>
<dbReference type="InParanoid" id="Q29040"/>
<dbReference type="OMA" id="QCDARDE"/>
<dbReference type="OrthoDB" id="5799427at2759"/>
<dbReference type="Reactome" id="R-SSC-1251985">
    <property type="pathway name" value="Nuclear signaling by ERBB4"/>
</dbReference>
<dbReference type="Reactome" id="R-SSC-1257604">
    <property type="pathway name" value="PIP3 activates AKT signaling"/>
</dbReference>
<dbReference type="Reactome" id="R-SSC-383280">
    <property type="pathway name" value="Nuclear Receptor transcription pathway"/>
</dbReference>
<dbReference type="Reactome" id="R-SSC-4090294">
    <property type="pathway name" value="SUMOylation of intracellular receptors"/>
</dbReference>
<dbReference type="Reactome" id="R-SSC-5689896">
    <property type="pathway name" value="Ovarian tumor domain proteases"/>
</dbReference>
<dbReference type="Reactome" id="R-SSC-6811558">
    <property type="pathway name" value="PI5P, PP2A and IER3 Regulate PI3K/AKT Signaling"/>
</dbReference>
<dbReference type="Reactome" id="R-SSC-8866910">
    <property type="pathway name" value="TFAP2 (AP-2) family regulates transcription of growth factors and their receptors"/>
</dbReference>
<dbReference type="Reactome" id="R-SSC-8931987">
    <property type="pathway name" value="RUNX1 regulates estrogen receptor mediated transcription"/>
</dbReference>
<dbReference type="Reactome" id="R-SSC-8939211">
    <property type="pathway name" value="ESR-mediated signaling"/>
</dbReference>
<dbReference type="Reactome" id="R-SSC-9009391">
    <property type="pathway name" value="Extra-nuclear estrogen signaling"/>
</dbReference>
<dbReference type="Reactome" id="R-SSC-9018519">
    <property type="pathway name" value="Estrogen-dependent gene expression"/>
</dbReference>
<dbReference type="Reactome" id="R-SSC-9841251">
    <property type="pathway name" value="Mitochondrial unfolded protein response (UPRmt)"/>
</dbReference>
<dbReference type="Proteomes" id="UP000008227">
    <property type="component" value="Chromosome 1"/>
</dbReference>
<dbReference type="Proteomes" id="UP000314985">
    <property type="component" value="Chromosome 1"/>
</dbReference>
<dbReference type="Proteomes" id="UP000694570">
    <property type="component" value="Unplaced"/>
</dbReference>
<dbReference type="Proteomes" id="UP000694571">
    <property type="component" value="Unplaced"/>
</dbReference>
<dbReference type="Proteomes" id="UP000694720">
    <property type="component" value="Unplaced"/>
</dbReference>
<dbReference type="Proteomes" id="UP000694722">
    <property type="component" value="Unplaced"/>
</dbReference>
<dbReference type="Proteomes" id="UP000694723">
    <property type="component" value="Unplaced"/>
</dbReference>
<dbReference type="Proteomes" id="UP000694724">
    <property type="component" value="Unplaced"/>
</dbReference>
<dbReference type="Proteomes" id="UP000694725">
    <property type="component" value="Unplaced"/>
</dbReference>
<dbReference type="Proteomes" id="UP000694726">
    <property type="component" value="Unplaced"/>
</dbReference>
<dbReference type="Proteomes" id="UP000694727">
    <property type="component" value="Unplaced"/>
</dbReference>
<dbReference type="Proteomes" id="UP000694728">
    <property type="component" value="Unplaced"/>
</dbReference>
<dbReference type="Bgee" id="ENSSSCG00000025777">
    <property type="expression patterns" value="Expressed in ovary and 30 other cell types or tissues"/>
</dbReference>
<dbReference type="ExpressionAtlas" id="Q29040">
    <property type="expression patterns" value="baseline and differential"/>
</dbReference>
<dbReference type="GO" id="GO:0000785">
    <property type="term" value="C:chromatin"/>
    <property type="evidence" value="ECO:0000318"/>
    <property type="project" value="GO_Central"/>
</dbReference>
<dbReference type="GO" id="GO:0005737">
    <property type="term" value="C:cytoplasm"/>
    <property type="evidence" value="ECO:0000250"/>
    <property type="project" value="UniProtKB"/>
</dbReference>
<dbReference type="GO" id="GO:0000791">
    <property type="term" value="C:euchromatin"/>
    <property type="evidence" value="ECO:0007669"/>
    <property type="project" value="Ensembl"/>
</dbReference>
<dbReference type="GO" id="GO:0005794">
    <property type="term" value="C:Golgi apparatus"/>
    <property type="evidence" value="ECO:0007669"/>
    <property type="project" value="UniProtKB-SubCell"/>
</dbReference>
<dbReference type="GO" id="GO:0005634">
    <property type="term" value="C:nucleus"/>
    <property type="evidence" value="ECO:0000250"/>
    <property type="project" value="UniProtKB"/>
</dbReference>
<dbReference type="GO" id="GO:0005886">
    <property type="term" value="C:plasma membrane"/>
    <property type="evidence" value="ECO:0007669"/>
    <property type="project" value="UniProtKB-SubCell"/>
</dbReference>
<dbReference type="GO" id="GO:0005667">
    <property type="term" value="C:transcription regulator complex"/>
    <property type="evidence" value="ECO:0007669"/>
    <property type="project" value="Ensembl"/>
</dbReference>
<dbReference type="GO" id="GO:0071889">
    <property type="term" value="F:14-3-3 protein binding"/>
    <property type="evidence" value="ECO:0007669"/>
    <property type="project" value="Ensembl"/>
</dbReference>
<dbReference type="GO" id="GO:0051117">
    <property type="term" value="F:ATPase binding"/>
    <property type="evidence" value="ECO:0007669"/>
    <property type="project" value="Ensembl"/>
</dbReference>
<dbReference type="GO" id="GO:0008013">
    <property type="term" value="F:beta-catenin binding"/>
    <property type="evidence" value="ECO:0007669"/>
    <property type="project" value="Ensembl"/>
</dbReference>
<dbReference type="GO" id="GO:0003682">
    <property type="term" value="F:chromatin binding"/>
    <property type="evidence" value="ECO:0007669"/>
    <property type="project" value="Ensembl"/>
</dbReference>
<dbReference type="GO" id="GO:0001228">
    <property type="term" value="F:DNA-binding transcription activator activity, RNA polymerase II-specific"/>
    <property type="evidence" value="ECO:0007669"/>
    <property type="project" value="Ensembl"/>
</dbReference>
<dbReference type="GO" id="GO:0034056">
    <property type="term" value="F:estrogen response element binding"/>
    <property type="evidence" value="ECO:0000318"/>
    <property type="project" value="GO_Central"/>
</dbReference>
<dbReference type="GO" id="GO:0042802">
    <property type="term" value="F:identical protein binding"/>
    <property type="evidence" value="ECO:0007669"/>
    <property type="project" value="Ensembl"/>
</dbReference>
<dbReference type="GO" id="GO:0030284">
    <property type="term" value="F:nuclear estrogen receptor activity"/>
    <property type="evidence" value="ECO:0007669"/>
    <property type="project" value="Ensembl"/>
</dbReference>
<dbReference type="GO" id="GO:0030331">
    <property type="term" value="F:nuclear estrogen receptor binding"/>
    <property type="evidence" value="ECO:0007669"/>
    <property type="project" value="Ensembl"/>
</dbReference>
<dbReference type="GO" id="GO:0004879">
    <property type="term" value="F:nuclear receptor activity"/>
    <property type="evidence" value="ECO:0000318"/>
    <property type="project" value="GO_Central"/>
</dbReference>
<dbReference type="GO" id="GO:0019901">
    <property type="term" value="F:protein kinase binding"/>
    <property type="evidence" value="ECO:0007669"/>
    <property type="project" value="Ensembl"/>
</dbReference>
<dbReference type="GO" id="GO:0043565">
    <property type="term" value="F:sequence-specific DNA binding"/>
    <property type="evidence" value="ECO:0000250"/>
    <property type="project" value="UniProtKB"/>
</dbReference>
<dbReference type="GO" id="GO:0005496">
    <property type="term" value="F:steroid binding"/>
    <property type="evidence" value="ECO:0000250"/>
    <property type="project" value="UniProtKB"/>
</dbReference>
<dbReference type="GO" id="GO:0017025">
    <property type="term" value="F:TBP-class protein binding"/>
    <property type="evidence" value="ECO:0007669"/>
    <property type="project" value="Ensembl"/>
</dbReference>
<dbReference type="GO" id="GO:0001093">
    <property type="term" value="F:TFIIB-class transcription factor binding"/>
    <property type="evidence" value="ECO:0007669"/>
    <property type="project" value="Ensembl"/>
</dbReference>
<dbReference type="GO" id="GO:0001223">
    <property type="term" value="F:transcription coactivator binding"/>
    <property type="evidence" value="ECO:0007669"/>
    <property type="project" value="Ensembl"/>
</dbReference>
<dbReference type="GO" id="GO:0001222">
    <property type="term" value="F:transcription corepressor binding"/>
    <property type="evidence" value="ECO:0007669"/>
    <property type="project" value="Ensembl"/>
</dbReference>
<dbReference type="GO" id="GO:0008270">
    <property type="term" value="F:zinc ion binding"/>
    <property type="evidence" value="ECO:0007669"/>
    <property type="project" value="UniProtKB-KW"/>
</dbReference>
<dbReference type="GO" id="GO:0008209">
    <property type="term" value="P:androgen metabolic process"/>
    <property type="evidence" value="ECO:0007669"/>
    <property type="project" value="Ensembl"/>
</dbReference>
<dbReference type="GO" id="GO:0001547">
    <property type="term" value="P:antral ovarian follicle growth"/>
    <property type="evidence" value="ECO:0007669"/>
    <property type="project" value="Ensembl"/>
</dbReference>
<dbReference type="GO" id="GO:0071392">
    <property type="term" value="P:cellular response to estradiol stimulus"/>
    <property type="evidence" value="ECO:0000250"/>
    <property type="project" value="UniProtKB"/>
</dbReference>
<dbReference type="GO" id="GO:0071391">
    <property type="term" value="P:cellular response to estrogen stimulus"/>
    <property type="evidence" value="ECO:0000318"/>
    <property type="project" value="GO_Central"/>
</dbReference>
<dbReference type="GO" id="GO:0002064">
    <property type="term" value="P:epithelial cell development"/>
    <property type="evidence" value="ECO:0007669"/>
    <property type="project" value="Ensembl"/>
</dbReference>
<dbReference type="GO" id="GO:0060750">
    <property type="term" value="P:epithelial cell proliferation involved in mammary gland duct elongation"/>
    <property type="evidence" value="ECO:0007669"/>
    <property type="project" value="Ensembl"/>
</dbReference>
<dbReference type="GO" id="GO:0030520">
    <property type="term" value="P:estrogen receptor signaling pathway"/>
    <property type="evidence" value="ECO:0000318"/>
    <property type="project" value="GO_Central"/>
</dbReference>
<dbReference type="GO" id="GO:0048144">
    <property type="term" value="P:fibroblast proliferation"/>
    <property type="evidence" value="ECO:0007669"/>
    <property type="project" value="Ensembl"/>
</dbReference>
<dbReference type="GO" id="GO:0008584">
    <property type="term" value="P:male gonad development"/>
    <property type="evidence" value="ECO:0007669"/>
    <property type="project" value="Ensembl"/>
</dbReference>
<dbReference type="GO" id="GO:0060749">
    <property type="term" value="P:mammary gland alveolus development"/>
    <property type="evidence" value="ECO:0007669"/>
    <property type="project" value="Ensembl"/>
</dbReference>
<dbReference type="GO" id="GO:0060745">
    <property type="term" value="P:mammary gland branching involved in pregnancy"/>
    <property type="evidence" value="ECO:0007669"/>
    <property type="project" value="Ensembl"/>
</dbReference>
<dbReference type="GO" id="GO:0043124">
    <property type="term" value="P:negative regulation of canonical NF-kappaB signal transduction"/>
    <property type="evidence" value="ECO:0000250"/>
    <property type="project" value="UniProtKB"/>
</dbReference>
<dbReference type="GO" id="GO:0043433">
    <property type="term" value="P:negative regulation of DNA-binding transcription factor activity"/>
    <property type="evidence" value="ECO:0000250"/>
    <property type="project" value="UniProtKB"/>
</dbReference>
<dbReference type="GO" id="GO:0010629">
    <property type="term" value="P:negative regulation of gene expression"/>
    <property type="evidence" value="ECO:0007669"/>
    <property type="project" value="Ensembl"/>
</dbReference>
<dbReference type="GO" id="GO:1902894">
    <property type="term" value="P:negative regulation of miRNA transcription"/>
    <property type="evidence" value="ECO:0007669"/>
    <property type="project" value="Ensembl"/>
</dbReference>
<dbReference type="GO" id="GO:0034392">
    <property type="term" value="P:negative regulation of smooth muscle cell apoptotic process"/>
    <property type="evidence" value="ECO:0000250"/>
    <property type="project" value="UniProtKB"/>
</dbReference>
<dbReference type="GO" id="GO:0000122">
    <property type="term" value="P:negative regulation of transcription by RNA polymerase II"/>
    <property type="evidence" value="ECO:0007669"/>
    <property type="project" value="Ensembl"/>
</dbReference>
<dbReference type="GO" id="GO:0030518">
    <property type="term" value="P:nuclear receptor-mediated steroid hormone signaling pathway"/>
    <property type="evidence" value="ECO:0000250"/>
    <property type="project" value="UniProtKB"/>
</dbReference>
<dbReference type="GO" id="GO:0007200">
    <property type="term" value="P:phospholipase C-activating G protein-coupled receptor signaling pathway"/>
    <property type="evidence" value="ECO:0000250"/>
    <property type="project" value="UniProtKB"/>
</dbReference>
<dbReference type="GO" id="GO:0007204">
    <property type="term" value="P:positive regulation of cytosolic calcium ion concentration"/>
    <property type="evidence" value="ECO:0000250"/>
    <property type="project" value="UniProtKB"/>
</dbReference>
<dbReference type="GO" id="GO:0051091">
    <property type="term" value="P:positive regulation of DNA-binding transcription factor activity"/>
    <property type="evidence" value="ECO:0000250"/>
    <property type="project" value="UniProtKB"/>
</dbReference>
<dbReference type="GO" id="GO:0045893">
    <property type="term" value="P:positive regulation of DNA-templated transcription"/>
    <property type="evidence" value="ECO:0000250"/>
    <property type="project" value="UniProtKB"/>
</dbReference>
<dbReference type="GO" id="GO:0048146">
    <property type="term" value="P:positive regulation of fibroblast proliferation"/>
    <property type="evidence" value="ECO:0007669"/>
    <property type="project" value="Ensembl"/>
</dbReference>
<dbReference type="GO" id="GO:0045429">
    <property type="term" value="P:positive regulation of nitric oxide biosynthetic process"/>
    <property type="evidence" value="ECO:0000250"/>
    <property type="project" value="UniProtKB"/>
</dbReference>
<dbReference type="GO" id="GO:0051000">
    <property type="term" value="P:positive regulation of nitric-oxide synthase activity"/>
    <property type="evidence" value="ECO:0000250"/>
    <property type="project" value="UniProtKB"/>
</dbReference>
<dbReference type="GO" id="GO:0060527">
    <property type="term" value="P:prostate epithelial cord arborization involved in prostate glandular acinus morphogenesis"/>
    <property type="evidence" value="ECO:0007669"/>
    <property type="project" value="Ensembl"/>
</dbReference>
<dbReference type="GO" id="GO:0060523">
    <property type="term" value="P:prostate epithelial cord elongation"/>
    <property type="evidence" value="ECO:0007669"/>
    <property type="project" value="Ensembl"/>
</dbReference>
<dbReference type="GO" id="GO:0071168">
    <property type="term" value="P:protein localization to chromatin"/>
    <property type="evidence" value="ECO:0007669"/>
    <property type="project" value="Ensembl"/>
</dbReference>
<dbReference type="GO" id="GO:0060687">
    <property type="term" value="P:regulation of branching involved in prostate gland morphogenesis"/>
    <property type="evidence" value="ECO:0007669"/>
    <property type="project" value="Ensembl"/>
</dbReference>
<dbReference type="GO" id="GO:1904035">
    <property type="term" value="P:regulation of epithelial cell apoptotic process"/>
    <property type="evidence" value="ECO:0007669"/>
    <property type="project" value="Ensembl"/>
</dbReference>
<dbReference type="GO" id="GO:0050727">
    <property type="term" value="P:regulation of inflammatory response"/>
    <property type="evidence" value="ECO:0007669"/>
    <property type="project" value="Ensembl"/>
</dbReference>
<dbReference type="GO" id="GO:0034121">
    <property type="term" value="P:regulation of toll-like receptor signaling pathway"/>
    <property type="evidence" value="ECO:0007669"/>
    <property type="project" value="Ensembl"/>
</dbReference>
<dbReference type="GO" id="GO:0006357">
    <property type="term" value="P:regulation of transcription by RNA polymerase II"/>
    <property type="evidence" value="ECO:0000318"/>
    <property type="project" value="GO_Central"/>
</dbReference>
<dbReference type="GO" id="GO:0051123">
    <property type="term" value="P:RNA polymerase II preinitiation complex assembly"/>
    <property type="evidence" value="ECO:0007669"/>
    <property type="project" value="Ensembl"/>
</dbReference>
<dbReference type="GO" id="GO:0048863">
    <property type="term" value="P:stem cell differentiation"/>
    <property type="evidence" value="ECO:0007669"/>
    <property type="project" value="Ensembl"/>
</dbReference>
<dbReference type="GO" id="GO:0060065">
    <property type="term" value="P:uterus development"/>
    <property type="evidence" value="ECO:0007669"/>
    <property type="project" value="Ensembl"/>
</dbReference>
<dbReference type="GO" id="GO:0060068">
    <property type="term" value="P:vagina development"/>
    <property type="evidence" value="ECO:0007669"/>
    <property type="project" value="Ensembl"/>
</dbReference>
<dbReference type="CDD" id="cd07171">
    <property type="entry name" value="NR_DBD_ER"/>
    <property type="match status" value="1"/>
</dbReference>
<dbReference type="CDD" id="cd06949">
    <property type="entry name" value="NR_LBD_ER"/>
    <property type="match status" value="1"/>
</dbReference>
<dbReference type="FunFam" id="1.10.565.10:FF:000010">
    <property type="entry name" value="Estrogen receptor"/>
    <property type="match status" value="1"/>
</dbReference>
<dbReference type="FunFam" id="3.30.50.10:FF:000014">
    <property type="entry name" value="Estrogen receptor beta"/>
    <property type="match status" value="1"/>
</dbReference>
<dbReference type="Gene3D" id="3.30.50.10">
    <property type="entry name" value="Erythroid Transcription Factor GATA-1, subunit A"/>
    <property type="match status" value="1"/>
</dbReference>
<dbReference type="Gene3D" id="1.10.565.10">
    <property type="entry name" value="Retinoid X Receptor"/>
    <property type="match status" value="1"/>
</dbReference>
<dbReference type="InterPro" id="IPR024178">
    <property type="entry name" value="Est_rcpt/est-rel_rcp"/>
</dbReference>
<dbReference type="InterPro" id="IPR001292">
    <property type="entry name" value="Estr_rcpt"/>
</dbReference>
<dbReference type="InterPro" id="IPR046944">
    <property type="entry name" value="Estr_rcpt_N"/>
</dbReference>
<dbReference type="InterPro" id="IPR035500">
    <property type="entry name" value="NHR-like_dom_sf"/>
</dbReference>
<dbReference type="InterPro" id="IPR000536">
    <property type="entry name" value="Nucl_hrmn_rcpt_lig-bd"/>
</dbReference>
<dbReference type="InterPro" id="IPR050200">
    <property type="entry name" value="Nuclear_hormone_rcpt_NR3"/>
</dbReference>
<dbReference type="InterPro" id="IPR001723">
    <property type="entry name" value="Nuclear_hrmn_rcpt"/>
</dbReference>
<dbReference type="InterPro" id="IPR024736">
    <property type="entry name" value="Oestrogen-typ_rcpt_final_C_dom"/>
</dbReference>
<dbReference type="InterPro" id="IPR001628">
    <property type="entry name" value="Znf_hrmn_rcpt"/>
</dbReference>
<dbReference type="InterPro" id="IPR013088">
    <property type="entry name" value="Znf_NHR/GATA"/>
</dbReference>
<dbReference type="PANTHER" id="PTHR48092">
    <property type="entry name" value="KNIRPS-RELATED PROTEIN-RELATED"/>
    <property type="match status" value="1"/>
</dbReference>
<dbReference type="Pfam" id="PF12743">
    <property type="entry name" value="ESR1_C"/>
    <property type="match status" value="1"/>
</dbReference>
<dbReference type="Pfam" id="PF00104">
    <property type="entry name" value="Hormone_recep"/>
    <property type="match status" value="1"/>
</dbReference>
<dbReference type="Pfam" id="PF02159">
    <property type="entry name" value="Oest_recep"/>
    <property type="match status" value="1"/>
</dbReference>
<dbReference type="Pfam" id="PF00105">
    <property type="entry name" value="zf-C4"/>
    <property type="match status" value="1"/>
</dbReference>
<dbReference type="PIRSF" id="PIRSF500101">
    <property type="entry name" value="ER-a"/>
    <property type="match status" value="1"/>
</dbReference>
<dbReference type="PIRSF" id="PIRSF002527">
    <property type="entry name" value="ER-like_NR"/>
    <property type="match status" value="1"/>
</dbReference>
<dbReference type="PRINTS" id="PR00543">
    <property type="entry name" value="OESTROGENR"/>
</dbReference>
<dbReference type="PRINTS" id="PR00398">
    <property type="entry name" value="STRDHORMONER"/>
</dbReference>
<dbReference type="PRINTS" id="PR00047">
    <property type="entry name" value="STROIDFINGER"/>
</dbReference>
<dbReference type="SMART" id="SM00430">
    <property type="entry name" value="HOLI"/>
    <property type="match status" value="1"/>
</dbReference>
<dbReference type="SMART" id="SM00399">
    <property type="entry name" value="ZnF_C4"/>
    <property type="match status" value="1"/>
</dbReference>
<dbReference type="SUPFAM" id="SSF57716">
    <property type="entry name" value="Glucocorticoid receptor-like (DNA-binding domain)"/>
    <property type="match status" value="1"/>
</dbReference>
<dbReference type="SUPFAM" id="SSF48508">
    <property type="entry name" value="Nuclear receptor ligand-binding domain"/>
    <property type="match status" value="1"/>
</dbReference>
<dbReference type="PROSITE" id="PS51843">
    <property type="entry name" value="NR_LBD"/>
    <property type="match status" value="1"/>
</dbReference>
<dbReference type="PROSITE" id="PS00031">
    <property type="entry name" value="NUCLEAR_REC_DBD_1"/>
    <property type="match status" value="1"/>
</dbReference>
<dbReference type="PROSITE" id="PS51030">
    <property type="entry name" value="NUCLEAR_REC_DBD_2"/>
    <property type="match status" value="1"/>
</dbReference>
<proteinExistence type="evidence at protein level"/>
<evidence type="ECO:0000250" key="1"/>
<evidence type="ECO:0000250" key="2">
    <source>
        <dbReference type="UniProtKB" id="P03372"/>
    </source>
</evidence>
<evidence type="ECO:0000250" key="3">
    <source>
        <dbReference type="UniProtKB" id="P06211"/>
    </source>
</evidence>
<evidence type="ECO:0000250" key="4">
    <source>
        <dbReference type="UniProtKB" id="P19785"/>
    </source>
</evidence>
<evidence type="ECO:0000255" key="5">
    <source>
        <dbReference type="PROSITE-ProRule" id="PRU00407"/>
    </source>
</evidence>
<evidence type="ECO:0000255" key="6">
    <source>
        <dbReference type="PROSITE-ProRule" id="PRU01189"/>
    </source>
</evidence>
<evidence type="ECO:0000256" key="7">
    <source>
        <dbReference type="SAM" id="MobiDB-lite"/>
    </source>
</evidence>
<evidence type="ECO:0000305" key="8"/>
<keyword id="KW-0010">Activator</keyword>
<keyword id="KW-1003">Cell membrane</keyword>
<keyword id="KW-0963">Cytoplasm</keyword>
<keyword id="KW-0903">Direct protein sequencing</keyword>
<keyword id="KW-0238">DNA-binding</keyword>
<keyword id="KW-0325">Glycoprotein</keyword>
<keyword id="KW-0333">Golgi apparatus</keyword>
<keyword id="KW-0446">Lipid-binding</keyword>
<keyword id="KW-0449">Lipoprotein</keyword>
<keyword id="KW-0472">Membrane</keyword>
<keyword id="KW-0479">Metal-binding</keyword>
<keyword id="KW-0488">Methylation</keyword>
<keyword id="KW-0539">Nucleus</keyword>
<keyword id="KW-0564">Palmitate</keyword>
<keyword id="KW-0597">Phosphoprotein</keyword>
<keyword id="KW-0675">Receptor</keyword>
<keyword id="KW-1185">Reference proteome</keyword>
<keyword id="KW-0754">Steroid-binding</keyword>
<keyword id="KW-0804">Transcription</keyword>
<keyword id="KW-0805">Transcription regulation</keyword>
<keyword id="KW-0832">Ubl conjugation</keyword>
<keyword id="KW-0862">Zinc</keyword>
<keyword id="KW-0863">Zinc-finger</keyword>
<name>ESR1_PIG</name>
<gene>
    <name type="primary">ESR1</name>
    <name type="synonym">ESR</name>
    <name type="synonym">NR3A1</name>
</gene>
<protein>
    <recommendedName>
        <fullName>Estrogen receptor</fullName>
        <shortName>ER</shortName>
    </recommendedName>
    <alternativeName>
        <fullName>ER-alpha</fullName>
    </alternativeName>
    <alternativeName>
        <fullName>Estradiol receptor</fullName>
    </alternativeName>
    <alternativeName>
        <fullName>Nuclear receptor subfamily 3 group A member 1</fullName>
    </alternativeName>
</protein>
<sequence>MTMTLHTKASGMALLHQIQANELEPLNRPQLKIPLERPLGEVYVDSSKPAVYNYPEGAAYDFNAAAAASAPVYGQSGLAYGPGSEAAAFGANGLGGFQPLNSVSPSPLVLLHPPPQLSPFLHPHGQQVPYYLENEPSGYAVREAGPPAFYRPNSDNRRQGGRERLASTSDKGSMAMESAKETRYCAVCNDYASGYHYGVWSCEGCKAFFKRSIQGHNDYMCPATNQCTIDKNRRKSCQACRLRKCYEVGMMKGGIRKDRRGGRMLKHKRQRDDGEGRNEAVPPGDMRSANLWPSPLLIKHTKKNSPVLSLTADQMISALLEAEPPIIYSEYDPTRPLSEASMMGLLTNLADRELVHMINWAKRVPGFLDLSLHDQVHLLECAWLEILMIGLVWRSMEHPGKLLFAPNLLLDRNQGKCVEGMVEIFDMLLATSSRFRMMNLQGEEFVCLKSIILLNSGVYTFLSSTLKSLEEKDHIHRVLDKITDTLIHLMAKAGLTLQQQHRRLAQLLLILSHFRHMSNKGMEHLYNMKCKNVVPLYDLLLEMLDAHRLHAPTNLGGPPPEDMSQSQLATSGSTPSHSLQMYYITGEAENFPTTI</sequence>
<feature type="chain" id="PRO_0000053622" description="Estrogen receptor">
    <location>
        <begin position="1"/>
        <end position="595"/>
    </location>
</feature>
<feature type="domain" description="NR LBD" evidence="6">
    <location>
        <begin position="311"/>
        <end position="547"/>
    </location>
</feature>
<feature type="DNA-binding region" description="Nuclear receptor" evidence="5">
    <location>
        <begin position="185"/>
        <end position="250"/>
    </location>
</feature>
<feature type="zinc finger region" description="NR C4-type" evidence="5">
    <location>
        <begin position="185"/>
        <end position="205"/>
    </location>
</feature>
<feature type="zinc finger region" description="NR C4-type" evidence="5">
    <location>
        <begin position="221"/>
        <end position="245"/>
    </location>
</feature>
<feature type="region of interest" description="Modulating (transactivation AF-1); mediates interaction with MACROD1" evidence="1">
    <location>
        <begin position="1"/>
        <end position="184"/>
    </location>
</feature>
<feature type="region of interest" description="Interaction with DDX5; self-association" evidence="1">
    <location>
        <begin position="35"/>
        <end position="174"/>
    </location>
</feature>
<feature type="region of interest" description="Required for interaction with NCOA1" evidence="1">
    <location>
        <begin position="35"/>
        <end position="47"/>
    </location>
</feature>
<feature type="region of interest" description="Disordered" evidence="7">
    <location>
        <begin position="144"/>
        <end position="174"/>
    </location>
</feature>
<feature type="region of interest" description="Mediates interaction with DNTTIP2" evidence="1">
    <location>
        <begin position="185"/>
        <end position="310"/>
    </location>
</feature>
<feature type="region of interest" description="Hinge">
    <location>
        <begin position="251"/>
        <end position="310"/>
    </location>
</feature>
<feature type="region of interest" description="Disordered" evidence="7">
    <location>
        <begin position="257"/>
        <end position="288"/>
    </location>
</feature>
<feature type="region of interest" description="Interaction with AKAP13" evidence="1">
    <location>
        <begin position="262"/>
        <end position="595"/>
    </location>
</feature>
<feature type="region of interest" description="Self-association" evidence="1">
    <location>
        <begin position="264"/>
        <end position="594"/>
    </location>
</feature>
<feature type="region of interest" description="Transactivation AF-2" evidence="1">
    <location>
        <begin position="311"/>
        <end position="594"/>
    </location>
</feature>
<feature type="region of interest" description="Disordered" evidence="7">
    <location>
        <begin position="551"/>
        <end position="575"/>
    </location>
</feature>
<feature type="compositionally biased region" description="Basic and acidic residues" evidence="7">
    <location>
        <begin position="154"/>
        <end position="165"/>
    </location>
</feature>
<feature type="compositionally biased region" description="Basic residues" evidence="7">
    <location>
        <begin position="257"/>
        <end position="269"/>
    </location>
</feature>
<feature type="compositionally biased region" description="Polar residues" evidence="7">
    <location>
        <begin position="563"/>
        <end position="575"/>
    </location>
</feature>
<feature type="binding site" evidence="2">
    <location>
        <position position="353"/>
    </location>
    <ligand>
        <name>17beta-estradiol</name>
        <dbReference type="ChEBI" id="CHEBI:16469"/>
    </ligand>
</feature>
<feature type="binding site" evidence="2">
    <location>
        <position position="394"/>
    </location>
    <ligand>
        <name>17beta-estradiol</name>
        <dbReference type="ChEBI" id="CHEBI:16469"/>
    </ligand>
</feature>
<feature type="binding site" evidence="2">
    <location>
        <position position="524"/>
    </location>
    <ligand>
        <name>17beta-estradiol</name>
        <dbReference type="ChEBI" id="CHEBI:16469"/>
    </ligand>
</feature>
<feature type="modified residue" description="Phosphoserine; by CDK2" evidence="2">
    <location>
        <position position="104"/>
    </location>
</feature>
<feature type="modified residue" description="Phosphoserine; by CDK2" evidence="2">
    <location>
        <position position="106"/>
    </location>
</feature>
<feature type="modified residue" description="Phosphoserine" evidence="2">
    <location>
        <position position="118"/>
    </location>
</feature>
<feature type="modified residue" description="Phosphoserine; by CK2" evidence="2">
    <location>
        <position position="167"/>
    </location>
</feature>
<feature type="modified residue" description="Asymmetric dimethylarginine; by PRMT1" evidence="2">
    <location>
        <position position="260"/>
    </location>
</feature>
<feature type="modified residue" description="Phosphotyrosine; by Tyr-kinases" evidence="2">
    <location>
        <position position="537"/>
    </location>
</feature>
<feature type="lipid moiety-binding region" description="S-palmitoyl cysteine" evidence="1">
    <location>
        <position position="447"/>
    </location>
</feature>
<feature type="glycosylation site" description="O-linked (GlcNAc) serine" evidence="1">
    <location>
        <position position="10"/>
    </location>
</feature>
<reference key="1">
    <citation type="journal article" date="1994" name="Mol. Cell. Endocrinol.">
        <title>The C-terminal half of the porcine estradiol receptor contains no post-translational modification: determination of the primary structure.</title>
        <authorList>
            <person name="Boekenkamp D."/>
            <person name="Jungblut P.W."/>
            <person name="Thole H.H."/>
        </authorList>
    </citation>
    <scope>NUCLEOTIDE SEQUENCE [MRNA]</scope>
    <scope>PARTIAL PROTEIN SEQUENCE</scope>
    <source>
        <tissue>Uterus</tissue>
    </source>
</reference>
<reference key="2">
    <citation type="journal article" date="1993" name="FEBS Lett.">
        <title>Assignment of the ligand binding site of the porcine estradiol receptor to the N-terminal 17 kDa part of domain E.</title>
        <authorList>
            <person name="Thole H.H."/>
        </authorList>
    </citation>
    <scope>PROTEIN SEQUENCE OF 303-323</scope>
</reference>
<reference key="3">
    <citation type="journal article" date="1995" name="Eur. J. Biochem.">
        <title>Surface mapping of the ligand-filled C-terminal half of the porcine estradiol receptor by restricted proteolysis.</title>
        <authorList>
            <person name="Thole H.H."/>
            <person name="Maschler I."/>
            <person name="Jungblut P.W."/>
        </authorList>
    </citation>
    <scope>PROTEIN SEQUENCE OF 297-307; 310-313; 320-323; 329-332; 337-340; 417-420 AND 466-473</scope>
</reference>